<accession>O23252</accession>
<keyword id="KW-0963">Cytoplasm</keyword>
<keyword id="KW-1015">Disulfide bond</keyword>
<keyword id="KW-0945">Host-virus interaction</keyword>
<keyword id="KW-0396">Initiation factor</keyword>
<keyword id="KW-0539">Nucleus</keyword>
<keyword id="KW-0611">Plant defense</keyword>
<keyword id="KW-0648">Protein biosynthesis</keyword>
<keyword id="KW-1185">Reference proteome</keyword>
<keyword id="KW-0694">RNA-binding</keyword>
<keyword id="KW-0810">Translation regulation</keyword>
<gene>
    <name evidence="11 12" type="primary">EIF4E1</name>
    <name type="synonym">CUM1</name>
    <name evidence="16" type="ordered locus">At4g18040</name>
    <name evidence="17" type="ORF">F15J5.10</name>
</gene>
<comment type="function">
    <text evidence="3 10 14 15">Component of the protein complex eIF4F, which is involved in the recognition of the mRNA cap, ATP-dependent unwinding of 5'-terminal secondary structure and recruitment of mRNA to the ribosome (PubMed:9680993). Recognizes and binds the 7-methylguanosine-containing mRNA cap during an early step in the initiation of protein synthesis and facilitates ribosome binding by inducing the unwinding of the mRNAs secondary structures (By similarity). Key component of recessive resistance to potyviruses (PubMed:29504210, PubMed:30784179).</text>
</comment>
<comment type="function">
    <text evidence="14 15">(Microbial infection) Susceptibility host factor required for viral infection by recruiting viral RNAs to the host ribosomal complex via an interaction with viral genome-linked protein (VPg).</text>
</comment>
<comment type="subunit">
    <text evidence="6 7">EIF4F is a multi-subunit complex, the composition of which varies with external and internal environmental conditions (PubMed:16343979). It is composed of at least EIF4A, EIF4E and EIF4G. EIF4E is also known to interact with other partners (PubMed:16343979). In higher plants two isoforms of EIF4F have been identified, named isoform EIF4F and isoform EIF(iso)4F (PubMed:16343979). Isoform EIF4F has subunits p220 and p26, whereas isoform EIF(iso)4F has subunits p82 and p28 (PubMed:16343979). Interacts directly with EXA1 (PubMed:28362261).</text>
</comment>
<comment type="subunit">
    <text evidence="14 15">(Microbial infection) Interacts with viral genome-linked protein (VPg); this interaction is possible in susceptible hosts but impaired in resistant plants.</text>
</comment>
<comment type="interaction">
    <interactant intactId="EBI-2359499">
        <id>O23252</id>
    </interactant>
    <interactant intactId="EBI-25506855">
        <id>O23160</id>
        <label>MYB73</label>
    </interactant>
    <organismsDiffer>false</organismsDiffer>
    <experiments>3</experiments>
</comment>
<comment type="subcellular location">
    <subcellularLocation>
        <location evidence="1">Nucleus</location>
    </subcellularLocation>
    <subcellularLocation>
        <location evidence="1">Cytoplasm</location>
    </subcellularLocation>
</comment>
<comment type="tissue specificity">
    <text evidence="10">Expressed in all tissues except in the cells of the specialization zone of the roots.</text>
</comment>
<comment type="PTM">
    <text evidence="2">According to the redox status, the Cys-133-Cys-171 disulfide bridge may have a role in regulating protein function by affecting its ability to bind capped mRNA.</text>
</comment>
<comment type="disruption phenotype">
    <text evidence="8 9">Delayed bolting (PubMed:29504210). Increased resistance to potyviruses such as clover yellow vein virus (ClYVV) and turnip mosaic virus (TuMV) (PubMed:29504210, PubMed:30784179).</text>
</comment>
<comment type="similarity">
    <text evidence="13">Belongs to the eukaryotic initiation factor 4E family.</text>
</comment>
<name>IF4E1_ARATH</name>
<protein>
    <recommendedName>
        <fullName evidence="11 12">Eukaryotic translation initiation factor 4E-1</fullName>
        <shortName evidence="11 12">eIF-4E-1</shortName>
        <shortName evidence="11 12">eIF4E-1</shortName>
    </recommendedName>
    <alternativeName>
        <fullName>Protein cucumovirus multiplication 1</fullName>
    </alternativeName>
    <alternativeName>
        <fullName evidence="13">eIF-4F 25 kDa subunit</fullName>
    </alternativeName>
    <alternativeName>
        <fullName evidence="13">eIF-4F p26 subunit</fullName>
    </alternativeName>
    <alternativeName>
        <fullName evidence="13">mRNA cap-binding protein</fullName>
    </alternativeName>
</protein>
<dbReference type="EMBL" id="Y10548">
    <property type="protein sequence ID" value="CAA71580.1"/>
    <property type="molecule type" value="mRNA"/>
</dbReference>
<dbReference type="EMBL" id="AL110123">
    <property type="protein sequence ID" value="CAB53645.1"/>
    <property type="molecule type" value="Genomic_DNA"/>
</dbReference>
<dbReference type="EMBL" id="AL161547">
    <property type="protein sequence ID" value="CAB78806.1"/>
    <property type="molecule type" value="Genomic_DNA"/>
</dbReference>
<dbReference type="EMBL" id="CP002687">
    <property type="protein sequence ID" value="AEE83987.1"/>
    <property type="molecule type" value="Genomic_DNA"/>
</dbReference>
<dbReference type="EMBL" id="AF389286">
    <property type="protein sequence ID" value="AAK63858.1"/>
    <property type="molecule type" value="mRNA"/>
</dbReference>
<dbReference type="EMBL" id="AY093750">
    <property type="protein sequence ID" value="AAM10374.1"/>
    <property type="molecule type" value="mRNA"/>
</dbReference>
<dbReference type="EMBL" id="AY086496">
    <property type="protein sequence ID" value="AAM63497.1"/>
    <property type="molecule type" value="mRNA"/>
</dbReference>
<dbReference type="PIR" id="T14804">
    <property type="entry name" value="T14804"/>
</dbReference>
<dbReference type="SMR" id="O23252"/>
<dbReference type="BioGRID" id="12822">
    <property type="interactions" value="11"/>
</dbReference>
<dbReference type="FunCoup" id="O23252">
    <property type="interactions" value="3640"/>
</dbReference>
<dbReference type="IntAct" id="O23252">
    <property type="interactions" value="2"/>
</dbReference>
<dbReference type="STRING" id="3702.O23252"/>
<dbReference type="GlyGen" id="O23252">
    <property type="glycosylation" value="1 site, 1 O-linked glycan (1 site)"/>
</dbReference>
<dbReference type="iPTMnet" id="O23252"/>
<dbReference type="PaxDb" id="3702-AT4G18040.1"/>
<dbReference type="ProteomicsDB" id="232201"/>
<dbReference type="EnsemblPlants" id="AT4G18040.1">
    <property type="protein sequence ID" value="AT4G18040.1"/>
    <property type="gene ID" value="AT4G18040"/>
</dbReference>
<dbReference type="GeneID" id="827529"/>
<dbReference type="Gramene" id="AT4G18040.1">
    <property type="protein sequence ID" value="AT4G18040.1"/>
    <property type="gene ID" value="AT4G18040"/>
</dbReference>
<dbReference type="KEGG" id="ath:AT4G18040"/>
<dbReference type="Araport" id="AT4G18040"/>
<dbReference type="TAIR" id="AT4G18040">
    <property type="gene designation" value="EIF4E"/>
</dbReference>
<dbReference type="eggNOG" id="KOG1670">
    <property type="taxonomic scope" value="Eukaryota"/>
</dbReference>
<dbReference type="HOGENOM" id="CLU_043552_2_1_1"/>
<dbReference type="InParanoid" id="O23252"/>
<dbReference type="OMA" id="QTEFKMM"/>
<dbReference type="OrthoDB" id="590761at2759"/>
<dbReference type="PhylomeDB" id="O23252"/>
<dbReference type="CD-CODE" id="24475C75">
    <property type="entry name" value="Stress granule"/>
</dbReference>
<dbReference type="PRO" id="PR:O23252"/>
<dbReference type="Proteomes" id="UP000006548">
    <property type="component" value="Chromosome 4"/>
</dbReference>
<dbReference type="ExpressionAtlas" id="O23252">
    <property type="expression patterns" value="baseline and differential"/>
</dbReference>
<dbReference type="GO" id="GO:0005737">
    <property type="term" value="C:cytoplasm"/>
    <property type="evidence" value="ECO:0007005"/>
    <property type="project" value="TAIR"/>
</dbReference>
<dbReference type="GO" id="GO:0010494">
    <property type="term" value="C:cytoplasmic stress granule"/>
    <property type="evidence" value="ECO:0000314"/>
    <property type="project" value="TAIR"/>
</dbReference>
<dbReference type="GO" id="GO:0005829">
    <property type="term" value="C:cytosol"/>
    <property type="evidence" value="ECO:0007005"/>
    <property type="project" value="TAIR"/>
</dbReference>
<dbReference type="GO" id="GO:0005730">
    <property type="term" value="C:nucleolus"/>
    <property type="evidence" value="ECO:0007005"/>
    <property type="project" value="TAIR"/>
</dbReference>
<dbReference type="GO" id="GO:0005634">
    <property type="term" value="C:nucleus"/>
    <property type="evidence" value="ECO:0007005"/>
    <property type="project" value="TAIR"/>
</dbReference>
<dbReference type="GO" id="GO:0000932">
    <property type="term" value="C:P-body"/>
    <property type="evidence" value="ECO:0000314"/>
    <property type="project" value="TAIR"/>
</dbReference>
<dbReference type="GO" id="GO:0003723">
    <property type="term" value="F:RNA binding"/>
    <property type="evidence" value="ECO:0007669"/>
    <property type="project" value="UniProtKB-KW"/>
</dbReference>
<dbReference type="GO" id="GO:0003743">
    <property type="term" value="F:translation initiation factor activity"/>
    <property type="evidence" value="ECO:0007669"/>
    <property type="project" value="UniProtKB-KW"/>
</dbReference>
<dbReference type="GO" id="GO:0006952">
    <property type="term" value="P:defense response"/>
    <property type="evidence" value="ECO:0007669"/>
    <property type="project" value="UniProtKB-KW"/>
</dbReference>
<dbReference type="GO" id="GO:0006417">
    <property type="term" value="P:regulation of translation"/>
    <property type="evidence" value="ECO:0007669"/>
    <property type="project" value="UniProtKB-KW"/>
</dbReference>
<dbReference type="GO" id="GO:0009615">
    <property type="term" value="P:response to virus"/>
    <property type="evidence" value="ECO:0000315"/>
    <property type="project" value="TAIR"/>
</dbReference>
<dbReference type="FunFam" id="3.30.760.10:FF:000003">
    <property type="entry name" value="Eukaryotic translation initiation factor 4E"/>
    <property type="match status" value="1"/>
</dbReference>
<dbReference type="Gene3D" id="3.30.760.10">
    <property type="entry name" value="RNA Cap, Translation Initiation Factor Eif4e"/>
    <property type="match status" value="1"/>
</dbReference>
<dbReference type="InterPro" id="IPR023398">
    <property type="entry name" value="TIF_eIF4e-like"/>
</dbReference>
<dbReference type="InterPro" id="IPR001040">
    <property type="entry name" value="TIF_eIF_4E"/>
</dbReference>
<dbReference type="InterPro" id="IPR019770">
    <property type="entry name" value="TIF_eIF_4E_CS"/>
</dbReference>
<dbReference type="PANTHER" id="PTHR11960">
    <property type="entry name" value="EUKARYOTIC TRANSLATION INITIATION FACTOR 4E RELATED"/>
    <property type="match status" value="1"/>
</dbReference>
<dbReference type="PANTHER" id="PTHR11960:SF8">
    <property type="entry name" value="EUKARYOTIC TRANSLATION INITIATION FACTOR 4E1-RELATED"/>
    <property type="match status" value="1"/>
</dbReference>
<dbReference type="Pfam" id="PF01652">
    <property type="entry name" value="IF4E"/>
    <property type="match status" value="1"/>
</dbReference>
<dbReference type="SUPFAM" id="SSF55418">
    <property type="entry name" value="eIF4e-like"/>
    <property type="match status" value="1"/>
</dbReference>
<dbReference type="PROSITE" id="PS00813">
    <property type="entry name" value="IF4E"/>
    <property type="match status" value="1"/>
</dbReference>
<reference key="1">
    <citation type="journal article" date="1998" name="Plant J.">
        <title>The Arabidopsis thaliana cDNAs coding for eIF4E and eIF(iso)4E are not functionally equivalent for yeast complementation and are differentially expressed during plant development.</title>
        <authorList>
            <person name="Rodriguez C.M."/>
            <person name="Freire M.A."/>
            <person name="Camilleri C."/>
            <person name="Robaglia C."/>
        </authorList>
    </citation>
    <scope>NUCLEOTIDE SEQUENCE [MRNA]</scope>
    <scope>FUNCTION</scope>
    <scope>TISSUE SPECIFICITY</scope>
</reference>
<reference key="2">
    <citation type="journal article" date="1999" name="Nature">
        <title>Sequence and analysis of chromosome 4 of the plant Arabidopsis thaliana.</title>
        <authorList>
            <person name="Mayer K.F.X."/>
            <person name="Schueller C."/>
            <person name="Wambutt R."/>
            <person name="Murphy G."/>
            <person name="Volckaert G."/>
            <person name="Pohl T."/>
            <person name="Duesterhoeft A."/>
            <person name="Stiekema W."/>
            <person name="Entian K.-D."/>
            <person name="Terryn N."/>
            <person name="Harris B."/>
            <person name="Ansorge W."/>
            <person name="Brandt P."/>
            <person name="Grivell L.A."/>
            <person name="Rieger M."/>
            <person name="Weichselgartner M."/>
            <person name="de Simone V."/>
            <person name="Obermaier B."/>
            <person name="Mache R."/>
            <person name="Mueller M."/>
            <person name="Kreis M."/>
            <person name="Delseny M."/>
            <person name="Puigdomenech P."/>
            <person name="Watson M."/>
            <person name="Schmidtheini T."/>
            <person name="Reichert B."/>
            <person name="Portetelle D."/>
            <person name="Perez-Alonso M."/>
            <person name="Boutry M."/>
            <person name="Bancroft I."/>
            <person name="Vos P."/>
            <person name="Hoheisel J."/>
            <person name="Zimmermann W."/>
            <person name="Wedler H."/>
            <person name="Ridley P."/>
            <person name="Langham S.-A."/>
            <person name="McCullagh B."/>
            <person name="Bilham L."/>
            <person name="Robben J."/>
            <person name="van der Schueren J."/>
            <person name="Grymonprez B."/>
            <person name="Chuang Y.-J."/>
            <person name="Vandenbussche F."/>
            <person name="Braeken M."/>
            <person name="Weltjens I."/>
            <person name="Voet M."/>
            <person name="Bastiaens I."/>
            <person name="Aert R."/>
            <person name="Defoor E."/>
            <person name="Weitzenegger T."/>
            <person name="Bothe G."/>
            <person name="Ramsperger U."/>
            <person name="Hilbert H."/>
            <person name="Braun M."/>
            <person name="Holzer E."/>
            <person name="Brandt A."/>
            <person name="Peters S."/>
            <person name="van Staveren M."/>
            <person name="Dirkse W."/>
            <person name="Mooijman P."/>
            <person name="Klein Lankhorst R."/>
            <person name="Rose M."/>
            <person name="Hauf J."/>
            <person name="Koetter P."/>
            <person name="Berneiser S."/>
            <person name="Hempel S."/>
            <person name="Feldpausch M."/>
            <person name="Lamberth S."/>
            <person name="Van den Daele H."/>
            <person name="De Keyser A."/>
            <person name="Buysshaert C."/>
            <person name="Gielen J."/>
            <person name="Villarroel R."/>
            <person name="De Clercq R."/>
            <person name="van Montagu M."/>
            <person name="Rogers J."/>
            <person name="Cronin A."/>
            <person name="Quail M.A."/>
            <person name="Bray-Allen S."/>
            <person name="Clark L."/>
            <person name="Doggett J."/>
            <person name="Hall S."/>
            <person name="Kay M."/>
            <person name="Lennard N."/>
            <person name="McLay K."/>
            <person name="Mayes R."/>
            <person name="Pettett A."/>
            <person name="Rajandream M.A."/>
            <person name="Lyne M."/>
            <person name="Benes V."/>
            <person name="Rechmann S."/>
            <person name="Borkova D."/>
            <person name="Bloecker H."/>
            <person name="Scharfe M."/>
            <person name="Grimm M."/>
            <person name="Loehnert T.-H."/>
            <person name="Dose S."/>
            <person name="de Haan M."/>
            <person name="Maarse A.C."/>
            <person name="Schaefer M."/>
            <person name="Mueller-Auer S."/>
            <person name="Gabel C."/>
            <person name="Fuchs M."/>
            <person name="Fartmann B."/>
            <person name="Granderath K."/>
            <person name="Dauner D."/>
            <person name="Herzl A."/>
            <person name="Neumann S."/>
            <person name="Argiriou A."/>
            <person name="Vitale D."/>
            <person name="Liguori R."/>
            <person name="Piravandi E."/>
            <person name="Massenet O."/>
            <person name="Quigley F."/>
            <person name="Clabauld G."/>
            <person name="Muendlein A."/>
            <person name="Felber R."/>
            <person name="Schnabl S."/>
            <person name="Hiller R."/>
            <person name="Schmidt W."/>
            <person name="Lecharny A."/>
            <person name="Aubourg S."/>
            <person name="Chefdor F."/>
            <person name="Cooke R."/>
            <person name="Berger C."/>
            <person name="Monfort A."/>
            <person name="Casacuberta E."/>
            <person name="Gibbons T."/>
            <person name="Weber N."/>
            <person name="Vandenbol M."/>
            <person name="Bargues M."/>
            <person name="Terol J."/>
            <person name="Torres A."/>
            <person name="Perez-Perez A."/>
            <person name="Purnelle B."/>
            <person name="Bent E."/>
            <person name="Johnson S."/>
            <person name="Tacon D."/>
            <person name="Jesse T."/>
            <person name="Heijnen L."/>
            <person name="Schwarz S."/>
            <person name="Scholler P."/>
            <person name="Heber S."/>
            <person name="Francs P."/>
            <person name="Bielke C."/>
            <person name="Frishman D."/>
            <person name="Haase D."/>
            <person name="Lemcke K."/>
            <person name="Mewes H.-W."/>
            <person name="Stocker S."/>
            <person name="Zaccaria P."/>
            <person name="Bevan M."/>
            <person name="Wilson R.K."/>
            <person name="de la Bastide M."/>
            <person name="Habermann K."/>
            <person name="Parnell L."/>
            <person name="Dedhia N."/>
            <person name="Gnoj L."/>
            <person name="Schutz K."/>
            <person name="Huang E."/>
            <person name="Spiegel L."/>
            <person name="Sekhon M."/>
            <person name="Murray J."/>
            <person name="Sheet P."/>
            <person name="Cordes M."/>
            <person name="Abu-Threideh J."/>
            <person name="Stoneking T."/>
            <person name="Kalicki J."/>
            <person name="Graves T."/>
            <person name="Harmon G."/>
            <person name="Edwards J."/>
            <person name="Latreille P."/>
            <person name="Courtney L."/>
            <person name="Cloud J."/>
            <person name="Abbott A."/>
            <person name="Scott K."/>
            <person name="Johnson D."/>
            <person name="Minx P."/>
            <person name="Bentley D."/>
            <person name="Fulton B."/>
            <person name="Miller N."/>
            <person name="Greco T."/>
            <person name="Kemp K."/>
            <person name="Kramer J."/>
            <person name="Fulton L."/>
            <person name="Mardis E."/>
            <person name="Dante M."/>
            <person name="Pepin K."/>
            <person name="Hillier L.W."/>
            <person name="Nelson J."/>
            <person name="Spieth J."/>
            <person name="Ryan E."/>
            <person name="Andrews S."/>
            <person name="Geisel C."/>
            <person name="Layman D."/>
            <person name="Du H."/>
            <person name="Ali J."/>
            <person name="Berghoff A."/>
            <person name="Jones K."/>
            <person name="Drone K."/>
            <person name="Cotton M."/>
            <person name="Joshu C."/>
            <person name="Antonoiu B."/>
            <person name="Zidanic M."/>
            <person name="Strong C."/>
            <person name="Sun H."/>
            <person name="Lamar B."/>
            <person name="Yordan C."/>
            <person name="Ma P."/>
            <person name="Zhong J."/>
            <person name="Preston R."/>
            <person name="Vil D."/>
            <person name="Shekher M."/>
            <person name="Matero A."/>
            <person name="Shah R."/>
            <person name="Swaby I.K."/>
            <person name="O'Shaughnessy A."/>
            <person name="Rodriguez M."/>
            <person name="Hoffman J."/>
            <person name="Till S."/>
            <person name="Granat S."/>
            <person name="Shohdy N."/>
            <person name="Hasegawa A."/>
            <person name="Hameed A."/>
            <person name="Lodhi M."/>
            <person name="Johnson A."/>
            <person name="Chen E."/>
            <person name="Marra M.A."/>
            <person name="Martienssen R."/>
            <person name="McCombie W.R."/>
        </authorList>
    </citation>
    <scope>NUCLEOTIDE SEQUENCE [LARGE SCALE GENOMIC DNA]</scope>
    <source>
        <strain>cv. Columbia</strain>
    </source>
</reference>
<reference key="3">
    <citation type="journal article" date="2017" name="Plant J.">
        <title>Araport11: a complete reannotation of the Arabidopsis thaliana reference genome.</title>
        <authorList>
            <person name="Cheng C.Y."/>
            <person name="Krishnakumar V."/>
            <person name="Chan A.P."/>
            <person name="Thibaud-Nissen F."/>
            <person name="Schobel S."/>
            <person name="Town C.D."/>
        </authorList>
    </citation>
    <scope>GENOME REANNOTATION</scope>
    <source>
        <strain>cv. Columbia</strain>
    </source>
</reference>
<reference key="4">
    <citation type="journal article" date="2003" name="Science">
        <title>Empirical analysis of transcriptional activity in the Arabidopsis genome.</title>
        <authorList>
            <person name="Yamada K."/>
            <person name="Lim J."/>
            <person name="Dale J.M."/>
            <person name="Chen H."/>
            <person name="Shinn P."/>
            <person name="Palm C.J."/>
            <person name="Southwick A.M."/>
            <person name="Wu H.C."/>
            <person name="Kim C.J."/>
            <person name="Nguyen M."/>
            <person name="Pham P.K."/>
            <person name="Cheuk R.F."/>
            <person name="Karlin-Newmann G."/>
            <person name="Liu S.X."/>
            <person name="Lam B."/>
            <person name="Sakano H."/>
            <person name="Wu T."/>
            <person name="Yu G."/>
            <person name="Miranda M."/>
            <person name="Quach H.L."/>
            <person name="Tripp M."/>
            <person name="Chang C.H."/>
            <person name="Lee J.M."/>
            <person name="Toriumi M.J."/>
            <person name="Chan M.M."/>
            <person name="Tang C.C."/>
            <person name="Onodera C.S."/>
            <person name="Deng J.M."/>
            <person name="Akiyama K."/>
            <person name="Ansari Y."/>
            <person name="Arakawa T."/>
            <person name="Banh J."/>
            <person name="Banno F."/>
            <person name="Bowser L."/>
            <person name="Brooks S.Y."/>
            <person name="Carninci P."/>
            <person name="Chao Q."/>
            <person name="Choy N."/>
            <person name="Enju A."/>
            <person name="Goldsmith A.D."/>
            <person name="Gurjal M."/>
            <person name="Hansen N.F."/>
            <person name="Hayashizaki Y."/>
            <person name="Johnson-Hopson C."/>
            <person name="Hsuan V.W."/>
            <person name="Iida K."/>
            <person name="Karnes M."/>
            <person name="Khan S."/>
            <person name="Koesema E."/>
            <person name="Ishida J."/>
            <person name="Jiang P.X."/>
            <person name="Jones T."/>
            <person name="Kawai J."/>
            <person name="Kamiya A."/>
            <person name="Meyers C."/>
            <person name="Nakajima M."/>
            <person name="Narusaka M."/>
            <person name="Seki M."/>
            <person name="Sakurai T."/>
            <person name="Satou M."/>
            <person name="Tamse R."/>
            <person name="Vaysberg M."/>
            <person name="Wallender E.K."/>
            <person name="Wong C."/>
            <person name="Yamamura Y."/>
            <person name="Yuan S."/>
            <person name="Shinozaki K."/>
            <person name="Davis R.W."/>
            <person name="Theologis A."/>
            <person name="Ecker J.R."/>
        </authorList>
    </citation>
    <scope>NUCLEOTIDE SEQUENCE [LARGE SCALE MRNA]</scope>
    <source>
        <strain>cv. Columbia</strain>
    </source>
</reference>
<reference key="5">
    <citation type="submission" date="2002-03" db="EMBL/GenBank/DDBJ databases">
        <title>Full-length cDNA from Arabidopsis thaliana.</title>
        <authorList>
            <person name="Brover V.V."/>
            <person name="Troukhan M.E."/>
            <person name="Alexandrov N.A."/>
            <person name="Lu Y.-P."/>
            <person name="Flavell R.B."/>
            <person name="Feldmann K.A."/>
        </authorList>
    </citation>
    <scope>NUCLEOTIDE SEQUENCE [LARGE SCALE MRNA]</scope>
</reference>
<reference key="6">
    <citation type="journal article" date="2006" name="Trends Plant Sci.">
        <title>Translation initiation factors: a weak link in plant RNA virus infection.</title>
        <authorList>
            <person name="Robaglia C."/>
            <person name="Caranta C."/>
        </authorList>
    </citation>
    <scope>REVIEW</scope>
    <scope>SUBUNIT</scope>
</reference>
<reference key="7">
    <citation type="journal article" date="2017" name="Elife">
        <title>Regulation of plant immune receptor accumulation through translational repression by a glycine-tyrosine-phenylalanine (GYF) domain protein.</title>
        <authorList>
            <person name="Wu Z."/>
            <person name="Huang S."/>
            <person name="Zhang X."/>
            <person name="Wu D."/>
            <person name="Xia S."/>
            <person name="Li X."/>
        </authorList>
    </citation>
    <scope>INTERACTION WITH EXA1</scope>
    <source>
        <strain>cv. Columbia</strain>
    </source>
</reference>
<reference key="8">
    <citation type="journal article" date="2018" name="Plant Biotechnol. J.">
        <title>Trans-species synthetic gene design allows resistance pyramiding and broad-spectrum engineering of virus resistance in plants.</title>
        <authorList>
            <person name="Bastet A."/>
            <person name="Lederer B."/>
            <person name="Giovinazzo N."/>
            <person name="Arnoux X."/>
            <person name="German-Retana S."/>
            <person name="Reinbold C."/>
            <person name="Brault V."/>
            <person name="Garcia D."/>
            <person name="Djennane S."/>
            <person name="Gersch S."/>
            <person name="Lemaire O."/>
            <person name="Robaglia C."/>
            <person name="Gallois J.-L."/>
        </authorList>
    </citation>
    <scope>FUNCTION (MICROBIAL INFECTION)</scope>
    <scope>DISRUPTION PHENOTYPE</scope>
    <scope>MUTAGENESIS OF TRP-69; THR-80; SER-81; SER-84; GLY-114 AND ASN-176</scope>
    <scope>SUBUNIT (MICROBIAL INFECTION)</scope>
    <source>
        <strain>cv. Columbia</strain>
    </source>
</reference>
<reference key="9">
    <citation type="journal article" date="2019" name="Plant Biotechnol. J.">
        <title>Mimicking natural polymorphism in eIF4E by CRISPR-Cas9 base editing is associated with resistance to potyviruses.</title>
        <authorList>
            <person name="Bastet A."/>
            <person name="Zafirov D."/>
            <person name="Giovinazzo N."/>
            <person name="Guyon-Debast A."/>
            <person name="Nogue F."/>
            <person name="Robaglia C."/>
            <person name="Gallois J.-L."/>
        </authorList>
    </citation>
    <scope>FUNCTION (MICROBIAL INFECTION)</scope>
    <scope>MUTAGENESIS OF TRP-69; THR-80; SER-81; SER-84; GLY-114 AND ASN-176</scope>
    <scope>DISRUPTION PHENOTYPE</scope>
    <scope>SUBUNIT (MICROBIAL INFECTION)</scope>
    <source>
        <strain>cv. Columbia</strain>
    </source>
</reference>
<evidence type="ECO:0000250" key="1">
    <source>
        <dbReference type="UniProtKB" id="K0P2S0"/>
    </source>
</evidence>
<evidence type="ECO:0000250" key="2">
    <source>
        <dbReference type="UniProtKB" id="P29557"/>
    </source>
</evidence>
<evidence type="ECO:0000250" key="3">
    <source>
        <dbReference type="UniProtKB" id="P48599"/>
    </source>
</evidence>
<evidence type="ECO:0000250" key="4">
    <source>
        <dbReference type="UniProtKB" id="Q00LS8"/>
    </source>
</evidence>
<evidence type="ECO:0000256" key="5">
    <source>
        <dbReference type="SAM" id="MobiDB-lite"/>
    </source>
</evidence>
<evidence type="ECO:0000269" key="6">
    <source>
    </source>
</evidence>
<evidence type="ECO:0000269" key="7">
    <source>
    </source>
</evidence>
<evidence type="ECO:0000269" key="8">
    <source>
    </source>
</evidence>
<evidence type="ECO:0000269" key="9">
    <source>
    </source>
</evidence>
<evidence type="ECO:0000269" key="10">
    <source>
    </source>
</evidence>
<evidence type="ECO:0000303" key="11">
    <source>
    </source>
</evidence>
<evidence type="ECO:0000303" key="12">
    <source>
    </source>
</evidence>
<evidence type="ECO:0000305" key="13"/>
<evidence type="ECO:0000305" key="14">
    <source>
    </source>
</evidence>
<evidence type="ECO:0000305" key="15">
    <source>
    </source>
</evidence>
<evidence type="ECO:0000312" key="16">
    <source>
        <dbReference type="Araport" id="AT4G18040"/>
    </source>
</evidence>
<evidence type="ECO:0000312" key="17">
    <source>
        <dbReference type="EMBL" id="CAB53645.1"/>
    </source>
</evidence>
<sequence>MAVEDTPKSVVTEEAKPNSIENPIDRYHEEGDDAEEGEIAGGEGDGNVDESSKSGVPESHPLEHSWTFWFDNPAVKSKQTSWGSSLRPVFTFSTVEEFWSLYNNMKHPSKLAHGADFYCFKHIIEPKWEDPICANGGKWTMTFPKEKSDKSWLYTLLALIGEQFDHGDEICGAVVNIRGKQERISIWTKNASNEAAQVSIGKQWKEFLDYNNSIGFIIHEDAKKLDRNAKNAYTA</sequence>
<feature type="chain" id="PRO_0000193654" description="Eukaryotic translation initiation factor 4E-1">
    <location>
        <begin position="1"/>
        <end position="235"/>
    </location>
</feature>
<feature type="region of interest" description="Disordered" evidence="5">
    <location>
        <begin position="1"/>
        <end position="59"/>
    </location>
</feature>
<feature type="region of interest" description="EIF4G-binding" evidence="4">
    <location>
        <begin position="60"/>
        <end position="63"/>
    </location>
</feature>
<feature type="region of interest" description="EIF4G-binding" evidence="4">
    <location>
        <begin position="70"/>
        <end position="106"/>
    </location>
</feature>
<feature type="region of interest" description="EIF4G-binding" evidence="4">
    <location>
        <begin position="154"/>
        <end position="163"/>
    </location>
</feature>
<feature type="compositionally biased region" description="Basic and acidic residues" evidence="5">
    <location>
        <begin position="1"/>
        <end position="16"/>
    </location>
</feature>
<feature type="binding site" evidence="2">
    <location>
        <begin position="78"/>
        <end position="83"/>
    </location>
    <ligand>
        <name>mRNA</name>
        <dbReference type="ChEBI" id="CHEBI:33699"/>
    </ligand>
    <ligandPart>
        <name>N(7)-methylguanosine 5'-triphosphate group</name>
        <dbReference type="ChEBI" id="CHEBI:74429"/>
        <note>m7GTP residue in mRNA cap</note>
    </ligandPart>
</feature>
<feature type="binding site" evidence="2">
    <location>
        <position position="110"/>
    </location>
    <ligand>
        <name>mRNA</name>
        <dbReference type="ChEBI" id="CHEBI:33699"/>
    </ligand>
    <ligandPart>
        <name>N(7)-methylguanosine 5'-triphosphate group</name>
        <dbReference type="ChEBI" id="CHEBI:74429"/>
        <note>m7GTP residue in mRNA cap</note>
    </ligandPart>
</feature>
<feature type="binding site" evidence="2">
    <location>
        <begin position="128"/>
        <end position="129"/>
    </location>
    <ligand>
        <name>mRNA</name>
        <dbReference type="ChEBI" id="CHEBI:33699"/>
    </ligand>
    <ligandPart>
        <name>N(7)-methylguanosine 5'-triphosphate group</name>
        <dbReference type="ChEBI" id="CHEBI:74429"/>
        <note>m7GTP residue in mRNA cap</note>
    </ligandPart>
</feature>
<feature type="binding site" evidence="2">
    <location>
        <begin position="178"/>
        <end position="183"/>
    </location>
    <ligand>
        <name>mRNA</name>
        <dbReference type="ChEBI" id="CHEBI:33699"/>
    </ligand>
    <ligandPart>
        <name>N(7)-methylguanosine 5'-triphosphate group</name>
        <dbReference type="ChEBI" id="CHEBI:74429"/>
        <note>m7GTP residue in mRNA cap</note>
    </ligandPart>
</feature>
<feature type="binding site" evidence="4">
    <location>
        <begin position="223"/>
        <end position="227"/>
    </location>
    <ligand>
        <name>mRNA</name>
        <dbReference type="ChEBI" id="CHEBI:33699"/>
    </ligand>
    <ligandPart>
        <name>N(7)-methylguanosine 5'-triphosphate group</name>
        <dbReference type="ChEBI" id="CHEBI:74429"/>
        <note>m7GTP residue in mRNA cap</note>
    </ligandPart>
</feature>
<feature type="disulfide bond" evidence="2">
    <location>
        <begin position="133"/>
        <end position="171"/>
    </location>
</feature>
<feature type="mutagenesis site" description="Normal bolting time and normal susceptibility to potyviruses such as clover yellow vein virus (ClYVV). In eIF4E1(R): Normal bolting time and increased resistance to potyviruses such as ClYVV, watermelon mosaic virus (WMV), turnip mosaic virus (TuMV, including resistance-breaking strains TuMV-E116Q and TuMV-N163Y), lettuce mosaic virus (LMV) and plum pox virus (PPV), and to polerovirus such as beet mild yellowing virus isolate USA (BWYV-USA); when associated with D-80; D-81; A-84; R-114 and K-176." evidence="8 9">
    <original>W</original>
    <variation>L</variation>
    <location>
        <position position="69"/>
    </location>
</feature>
<feature type="mutagenesis site" description="Normal bolting time and increased resistance to potyviruses such as clover yellow vein virus (ClYVV), watermelon mosaic virus (WMV) and turnip mosaic virus (TuMV, including resistance-breaking strains TuMV-E116Q and TuMV-N163Y); when associated with D-81. In eIF4E1(R); normal bolting time and increased resistance to potyviruses such as ClYVV, WMV, TuMV (including resistance-breaking strains TuMV-E116Q and TuMV-N163Y), lettuce mosaic virus (LMV) and plum pox virus (PPV), and to polerovirus such as beet mild yellowing virus isolate USA (BWYV-USA); when associated with L-69; D-81; A-84; R-114 and K-176." evidence="8 9">
    <original>T</original>
    <variation>D</variation>
    <location>
        <position position="80"/>
    </location>
</feature>
<feature type="mutagenesis site" description="Normal bolting time and increased resistance to potyviruses such as clover yellow vein virus (ClYVV), watermelon mosaic virus (WMV) and turnip mosaic virus (TuMV, including resistance-breaking strains TuMV-E116Q and TuMV-N163Y); when associated with D-80. In eIF4E1(R); normal bolting time and increased resistance to potyviruses such as ClYVV, WMV, TuMV (including resistance-breaking strains TuMV-E116Q and TuMV-N163Y), lettuce mosaic virus (LMV) and plum pox virus (PPV), and to polerovirus such as beet mild yellowing virus isolate USA (BWYV-USA); when associated with L-69; D-80; A-84; R-114 and K-176." evidence="8 9">
    <original>S</original>
    <variation>D</variation>
    <location>
        <position position="81"/>
    </location>
</feature>
<feature type="mutagenesis site" description="Normal bolting time and partial resistance to potyviruses such as clover yellow vein virus (ClYVV). In eIF4E1(R); normal bolting time and increased resistance to potyviruses such as ClYVV, watermelon mosaic virus (WMV), turnip mosaic virus (TuMV, including resistance-breaking strains TuMV-E116Q and TuMV-N163Y), lettuce mosaic virus (LMV) and plum pox virus (PPV), and to polerovirus such as beet mild yellowing virus isolate USA (BWYV-USA); when associated with L-69; D-80; D-81; R-114 and K-176." evidence="8 9">
    <original>S</original>
    <variation>A</variation>
    <location>
        <position position="84"/>
    </location>
</feature>
<feature type="mutagenesis site" description="Normal bolting time and partial resistance to potyviruses such as clover yellow vein virus (ClYVV), watermelon mosaic virus (WMV) and turnip mosaic virus (TuMV). In eIF4E1(R); normal bolting time and increased resistance to potyviruses such as ClYVV, WMV, TuMV (including resistance-breaking strains TuMV-E116Q and TuMV-N163Y), lettuce mosaic virus (LMV) and plum pox virus (PPV), and to polerovirus such as beet mild yellowing virus isolate USA (BWYV-USA); when associated with L-69; D-80; D-81; A-84 and K-176." evidence="8 9">
    <original>G</original>
    <variation>R</variation>
    <location>
        <position position="114"/>
    </location>
</feature>
<feature type="mutagenesis site" description="Normal bolting time and increased resistance to potyviruses such as clover yellow vein virus (ClYVV), watermelon mosaic virus (WMV) and turnip mosaic virus (TuMV). In eIF4E1(R); normal bolting time and increased resistance to potyvirus such as ClYVV, TuMV (including resistance-breaking strains TuMV-E116Q and TuMV-N163Y), WMV, lettuce mosaic virus (LMV) and plum pox virus (PPV), and to polerovirus such as beet mild yellowing virus isolate USA (BWYV-USA); when associated with L-69; D-80; D-81; A-84 and R-114." evidence="8 9">
    <original>N</original>
    <variation>K</variation>
    <location>
        <position position="176"/>
    </location>
</feature>
<proteinExistence type="evidence at protein level"/>
<organism>
    <name type="scientific">Arabidopsis thaliana</name>
    <name type="common">Mouse-ear cress</name>
    <dbReference type="NCBI Taxonomy" id="3702"/>
    <lineage>
        <taxon>Eukaryota</taxon>
        <taxon>Viridiplantae</taxon>
        <taxon>Streptophyta</taxon>
        <taxon>Embryophyta</taxon>
        <taxon>Tracheophyta</taxon>
        <taxon>Spermatophyta</taxon>
        <taxon>Magnoliopsida</taxon>
        <taxon>eudicotyledons</taxon>
        <taxon>Gunneridae</taxon>
        <taxon>Pentapetalae</taxon>
        <taxon>rosids</taxon>
        <taxon>malvids</taxon>
        <taxon>Brassicales</taxon>
        <taxon>Brassicaceae</taxon>
        <taxon>Camelineae</taxon>
        <taxon>Arabidopsis</taxon>
    </lineage>
</organism>